<comment type="function">
    <text evidence="4">Thiol-specific peroxidase that catalyzes the reduction of hydrogen peroxide and organic hydroperoxides to water and alcohols, respectively (By similarity). Can reduce H(2)O(2) and short chain organic, fatty acid, and phospholipid hydroperoxides (By similarity). Also has phospholipase activity, and can therefore either reduce the oxidized sn-2 fatty acyl group of phospholipids (peroxidase activity) or hydrolyze the sn-2 ester bond of phospholipids (phospholipase activity) (By similarity). These activities are dependent on binding to phospholipids at acidic pH and to oxidized phospholipds at cytosolic pH (By similarity). Plays a role in cell protection against oxidative stress by detoxifying peroxides and in phospholipid homeostasis (By similarity). Exhibits acyl-CoA-dependent lysophospholipid acyltransferase which mediates the conversion of lysophosphatidylcholine (1-acyl-sn-glycero-3-phosphocholine or LPC) into phosphatidylcholine (1,2-diacyl-sn-glycero-3-phosphocholine or PC) (By similarity). Shows a clear preference for LPC as the lysophospholipid and for palmitoyl CoA as the fatty acyl substrate (By similarity).</text>
</comment>
<comment type="catalytic activity">
    <reaction evidence="4">
        <text>a hydroperoxide + 2 glutathione = an alcohol + glutathione disulfide + H2O</text>
        <dbReference type="Rhea" id="RHEA:62632"/>
        <dbReference type="ChEBI" id="CHEBI:15377"/>
        <dbReference type="ChEBI" id="CHEBI:30879"/>
        <dbReference type="ChEBI" id="CHEBI:35924"/>
        <dbReference type="ChEBI" id="CHEBI:57925"/>
        <dbReference type="ChEBI" id="CHEBI:58297"/>
        <dbReference type="EC" id="1.11.1.27"/>
    </reaction>
</comment>
<comment type="catalytic activity">
    <reaction evidence="4">
        <text>a 1,2-diacyl-sn-glycero-3-phosphocholine + H2O = a 1-acyl-sn-glycero-3-phosphocholine + a fatty acid + H(+)</text>
        <dbReference type="Rhea" id="RHEA:15801"/>
        <dbReference type="ChEBI" id="CHEBI:15377"/>
        <dbReference type="ChEBI" id="CHEBI:15378"/>
        <dbReference type="ChEBI" id="CHEBI:28868"/>
        <dbReference type="ChEBI" id="CHEBI:57643"/>
        <dbReference type="ChEBI" id="CHEBI:58168"/>
        <dbReference type="EC" id="3.1.1.4"/>
    </reaction>
</comment>
<comment type="catalytic activity">
    <reaction evidence="4">
        <text>a 1-acyl-sn-glycero-3-phosphocholine + an acyl-CoA = a 1,2-diacyl-sn-glycero-3-phosphocholine + CoA</text>
        <dbReference type="Rhea" id="RHEA:12937"/>
        <dbReference type="ChEBI" id="CHEBI:57287"/>
        <dbReference type="ChEBI" id="CHEBI:57643"/>
        <dbReference type="ChEBI" id="CHEBI:58168"/>
        <dbReference type="ChEBI" id="CHEBI:58342"/>
        <dbReference type="EC" id="2.3.1.23"/>
    </reaction>
</comment>
<comment type="catalytic activity">
    <reaction evidence="4">
        <text>1-hexadecanoyl-sn-glycero-3-phosphocholine + hexadecanoyl-CoA = 1,2-dihexadecanoyl-sn-glycero-3-phosphocholine + CoA</text>
        <dbReference type="Rhea" id="RHEA:35983"/>
        <dbReference type="ChEBI" id="CHEBI:57287"/>
        <dbReference type="ChEBI" id="CHEBI:57379"/>
        <dbReference type="ChEBI" id="CHEBI:72998"/>
        <dbReference type="ChEBI" id="CHEBI:72999"/>
    </reaction>
    <physiologicalReaction direction="left-to-right" evidence="4">
        <dbReference type="Rhea" id="RHEA:35984"/>
    </physiologicalReaction>
</comment>
<comment type="catalytic activity">
    <reaction evidence="4">
        <text>1,2-dihexadecanoyl-sn-glycero-3-phosphocholine + H2O = 1-hexadecanoyl-sn-glycero-3-phosphocholine + hexadecanoate + H(+)</text>
        <dbReference type="Rhea" id="RHEA:41223"/>
        <dbReference type="ChEBI" id="CHEBI:7896"/>
        <dbReference type="ChEBI" id="CHEBI:15377"/>
        <dbReference type="ChEBI" id="CHEBI:15378"/>
        <dbReference type="ChEBI" id="CHEBI:72998"/>
        <dbReference type="ChEBI" id="CHEBI:72999"/>
    </reaction>
    <physiologicalReaction direction="left-to-right" evidence="4">
        <dbReference type="Rhea" id="RHEA:41224"/>
    </physiologicalReaction>
</comment>
<comment type="subunit">
    <text evidence="1 3 4">Homodimer (By similarity). Interacts with GSTP1; mediates PRDX6 glutathionylation and regeneration (By similarity). Interacts with APEX1. Interacts with STH. May interact with FAM168B (By similarity). May interact with HTR2A (By similarity).</text>
</comment>
<comment type="subcellular location">
    <subcellularLocation>
        <location evidence="2">Cytoplasm</location>
    </subcellularLocation>
    <subcellularLocation>
        <location evidence="2">Lysosome</location>
    </subcellularLocation>
    <text evidence="2">Also found in lung secretory organelles (lamellar bodies).</text>
</comment>
<comment type="PTM">
    <text evidence="4">Irreversibly inactivated by overoxidation of Cys-47 to sulfinic acid (Cys-SO(2)H) and sulfonic acid (Cys-SO(3)H) forms upon oxidative stress.</text>
</comment>
<comment type="PTM">
    <text evidence="2">Phosphorylation at Thr-177 by MAP kinases increases the phospholipase activity of the enzyme (By similarity). The phosphorylated form exhibits a greater lysophosphatidylcholine acyltransferase activity compared to the non-phosphorylated form (By similarity).</text>
</comment>
<comment type="miscellaneous">
    <text evidence="2">The active site is a conserved redox-active cysteine residue, the peroxidatic cysteine (C(P)), which makes the nucleophilic attack on the peroxide substrate. The peroxide oxidizes the C(P)-SH to cysteine sulfenic acid (C(P)-SOH), which then reacts with another cysteine residue, the resolving cysteine (C(R)), to form a disulfide bridge. The disulfide is subsequently reduced by an appropriate electron donor to complete the catalytic cycle. In this 1-Cys peroxiredoxin, no C(R) is present and C(P) instead forms a disulfide with a cysteine from another protein or with a small thiol molecule. C(P) is reactivated by glutathionylation mediated by glutathione S-transferase Pi, followed by spontaneous reduction of the enzyme with glutathione.</text>
</comment>
<comment type="similarity">
    <text evidence="6">Belongs to the peroxiredoxin family. Prx6 subfamily.</text>
</comment>
<sequence>MPGGLLLGDEAPNFEANTTVGRIRFHDFLGDSWGILFSHPRDFTPVCTTELGRAAKLAPEFAKRNVKLIALSIDSVEDHLAWSKDTNAYNCEEPTEKLPFPIIDDKNRDLAILLGMLDPAEKDEKGMPVTARVVFVFGPDKKLKLSILYPATTGRNFDEILRVVISLQLTAEKRVATPVDWKDGDSVMVLPTIPEEEAKKLFPKGVFTKELPSGKKYLRYTPQP</sequence>
<evidence type="ECO:0000250" key="1">
    <source>
        <dbReference type="UniProtKB" id="O08709"/>
    </source>
</evidence>
<evidence type="ECO:0000250" key="2">
    <source>
        <dbReference type="UniProtKB" id="O35244"/>
    </source>
</evidence>
<evidence type="ECO:0000250" key="3">
    <source>
        <dbReference type="UniProtKB" id="O77834"/>
    </source>
</evidence>
<evidence type="ECO:0000250" key="4">
    <source>
        <dbReference type="UniProtKB" id="P30041"/>
    </source>
</evidence>
<evidence type="ECO:0000255" key="5">
    <source>
        <dbReference type="PROSITE-ProRule" id="PRU00691"/>
    </source>
</evidence>
<evidence type="ECO:0000305" key="6"/>
<accession>Q2PFL9</accession>
<keyword id="KW-0007">Acetylation</keyword>
<keyword id="KW-0049">Antioxidant</keyword>
<keyword id="KW-0963">Cytoplasm</keyword>
<keyword id="KW-0378">Hydrolase</keyword>
<keyword id="KW-0442">Lipid degradation</keyword>
<keyword id="KW-0443">Lipid metabolism</keyword>
<keyword id="KW-0458">Lysosome</keyword>
<keyword id="KW-0511">Multifunctional enzyme</keyword>
<keyword id="KW-0560">Oxidoreductase</keyword>
<keyword id="KW-0575">Peroxidase</keyword>
<keyword id="KW-0597">Phosphoprotein</keyword>
<keyword id="KW-0676">Redox-active center</keyword>
<keyword id="KW-1185">Reference proteome</keyword>
<keyword id="KW-0808">Transferase</keyword>
<name>PRDX6_MACFA</name>
<proteinExistence type="evidence at transcript level"/>
<protein>
    <recommendedName>
        <fullName>Peroxiredoxin-6</fullName>
        <ecNumber evidence="4">1.11.1.27</ecNumber>
    </recommendedName>
    <alternativeName>
        <fullName>1-Cys peroxiredoxin</fullName>
        <shortName>1-Cys PRX</shortName>
    </alternativeName>
    <alternativeName>
        <fullName>Acidic calcium-independent phospholipase A2</fullName>
        <shortName>aiPLA2</shortName>
        <ecNumber>3.1.1.4</ecNumber>
    </alternativeName>
    <alternativeName>
        <fullName evidence="6">Glutathione-dependent peroxiredoxin</fullName>
    </alternativeName>
    <alternativeName>
        <fullName evidence="4">Lysophosphatidylcholine acyltransferase 5</fullName>
        <shortName>LPC acyltransferase 5</shortName>
        <shortName>LPCAT-5</shortName>
        <shortName>Lyso-PC acyltransferase 5</shortName>
        <ecNumber evidence="4">2.3.1.23</ecNumber>
    </alternativeName>
    <alternativeName>
        <fullName>Non-selenium glutathione peroxidase</fullName>
        <shortName>NSGPx</shortName>
    </alternativeName>
</protein>
<dbReference type="EC" id="1.11.1.27" evidence="4"/>
<dbReference type="EC" id="3.1.1.4"/>
<dbReference type="EC" id="2.3.1.23" evidence="4"/>
<dbReference type="EMBL" id="AB220568">
    <property type="protein sequence ID" value="BAE73101.1"/>
    <property type="molecule type" value="mRNA"/>
</dbReference>
<dbReference type="BMRB" id="Q2PFL9"/>
<dbReference type="SMR" id="Q2PFL9"/>
<dbReference type="STRING" id="9541.ENSMFAP00000014623"/>
<dbReference type="PeroxiBase" id="4430">
    <property type="entry name" value="Mfa1CysPrx"/>
</dbReference>
<dbReference type="eggNOG" id="KOG0854">
    <property type="taxonomic scope" value="Eukaryota"/>
</dbReference>
<dbReference type="Proteomes" id="UP000233100">
    <property type="component" value="Unplaced"/>
</dbReference>
<dbReference type="GO" id="GO:0005737">
    <property type="term" value="C:cytoplasm"/>
    <property type="evidence" value="ECO:0000250"/>
    <property type="project" value="UniProtKB"/>
</dbReference>
<dbReference type="GO" id="GO:0005829">
    <property type="term" value="C:cytosol"/>
    <property type="evidence" value="ECO:0007669"/>
    <property type="project" value="TreeGrafter"/>
</dbReference>
<dbReference type="GO" id="GO:0005764">
    <property type="term" value="C:lysosome"/>
    <property type="evidence" value="ECO:0007669"/>
    <property type="project" value="UniProtKB-SubCell"/>
</dbReference>
<dbReference type="GO" id="GO:0005739">
    <property type="term" value="C:mitochondrion"/>
    <property type="evidence" value="ECO:0007669"/>
    <property type="project" value="TreeGrafter"/>
</dbReference>
<dbReference type="GO" id="GO:0047184">
    <property type="term" value="F:1-acylglycerophosphocholine O-acyltransferase activity"/>
    <property type="evidence" value="ECO:0000250"/>
    <property type="project" value="UniProtKB"/>
</dbReference>
<dbReference type="GO" id="GO:0051920">
    <property type="term" value="F:peroxiredoxin activity"/>
    <property type="evidence" value="ECO:0007669"/>
    <property type="project" value="InterPro"/>
</dbReference>
<dbReference type="GO" id="GO:0004623">
    <property type="term" value="F:phospholipase A2 activity"/>
    <property type="evidence" value="ECO:0000250"/>
    <property type="project" value="UniProtKB"/>
</dbReference>
<dbReference type="GO" id="GO:0045454">
    <property type="term" value="P:cell redox homeostasis"/>
    <property type="evidence" value="ECO:0007669"/>
    <property type="project" value="TreeGrafter"/>
</dbReference>
<dbReference type="GO" id="GO:0016042">
    <property type="term" value="P:lipid catabolic process"/>
    <property type="evidence" value="ECO:0007669"/>
    <property type="project" value="UniProtKB-KW"/>
</dbReference>
<dbReference type="CDD" id="cd03016">
    <property type="entry name" value="PRX_1cys"/>
    <property type="match status" value="1"/>
</dbReference>
<dbReference type="FunFam" id="3.30.1020.10:FF:000001">
    <property type="entry name" value="1-Cys peroxiredoxin"/>
    <property type="match status" value="1"/>
</dbReference>
<dbReference type="FunFam" id="3.40.30.10:FF:000011">
    <property type="entry name" value="Peroxiredoxin PRX1"/>
    <property type="match status" value="1"/>
</dbReference>
<dbReference type="Gene3D" id="3.30.1020.10">
    <property type="entry name" value="Antioxidant, Horf6, Chain A, domain2"/>
    <property type="match status" value="1"/>
</dbReference>
<dbReference type="Gene3D" id="3.40.30.10">
    <property type="entry name" value="Glutaredoxin"/>
    <property type="match status" value="1"/>
</dbReference>
<dbReference type="InterPro" id="IPR000866">
    <property type="entry name" value="AhpC/TSA"/>
</dbReference>
<dbReference type="InterPro" id="IPR024706">
    <property type="entry name" value="Peroxiredoxin_AhpC-typ"/>
</dbReference>
<dbReference type="InterPro" id="IPR019479">
    <property type="entry name" value="Peroxiredoxin_C"/>
</dbReference>
<dbReference type="InterPro" id="IPR045020">
    <property type="entry name" value="PRX_1cys"/>
</dbReference>
<dbReference type="InterPro" id="IPR036249">
    <property type="entry name" value="Thioredoxin-like_sf"/>
</dbReference>
<dbReference type="InterPro" id="IPR013766">
    <property type="entry name" value="Thioredoxin_domain"/>
</dbReference>
<dbReference type="PANTHER" id="PTHR43503">
    <property type="entry name" value="MCG48959-RELATED"/>
    <property type="match status" value="1"/>
</dbReference>
<dbReference type="PANTHER" id="PTHR43503:SF4">
    <property type="entry name" value="PEROXIREDOXIN-6"/>
    <property type="match status" value="1"/>
</dbReference>
<dbReference type="Pfam" id="PF10417">
    <property type="entry name" value="1-cysPrx_C"/>
    <property type="match status" value="1"/>
</dbReference>
<dbReference type="Pfam" id="PF00578">
    <property type="entry name" value="AhpC-TSA"/>
    <property type="match status" value="1"/>
</dbReference>
<dbReference type="PIRSF" id="PIRSF000239">
    <property type="entry name" value="AHPC"/>
    <property type="match status" value="1"/>
</dbReference>
<dbReference type="SUPFAM" id="SSF52833">
    <property type="entry name" value="Thioredoxin-like"/>
    <property type="match status" value="1"/>
</dbReference>
<dbReference type="PROSITE" id="PS51352">
    <property type="entry name" value="THIOREDOXIN_2"/>
    <property type="match status" value="1"/>
</dbReference>
<gene>
    <name type="primary">PRDX6</name>
    <name type="ORF">QtsA-11939</name>
</gene>
<reference key="1">
    <citation type="submission" date="2005-07" db="EMBL/GenBank/DDBJ databases">
        <title>Analysis of gene expression in cynomolgus monkey tissues by macaque cDNA oligo-chips.</title>
        <authorList>
            <person name="Kobayashi M."/>
            <person name="Tanuma R."/>
            <person name="Hirata M."/>
            <person name="Osada N."/>
            <person name="Kusuda J."/>
            <person name="Sugano S."/>
            <person name="Hashimoto K."/>
        </authorList>
    </citation>
    <scope>NUCLEOTIDE SEQUENCE [LARGE SCALE MRNA]</scope>
    <source>
        <tissue>Testis</tissue>
    </source>
</reference>
<feature type="chain" id="PRO_0000256860" description="Peroxiredoxin-6">
    <location>
        <begin position="1"/>
        <end position="224"/>
    </location>
</feature>
<feature type="domain" description="Thioredoxin" evidence="5">
    <location>
        <begin position="5"/>
        <end position="169"/>
    </location>
</feature>
<feature type="region of interest" description="Required and sufficient for targeting to lysosomes and lamellar bodies" evidence="2">
    <location>
        <begin position="31"/>
        <end position="40"/>
    </location>
</feature>
<feature type="active site" description="Cysteine sulfenic acid (-SOH) intermediate; for peroxidase activity" evidence="4">
    <location>
        <position position="47"/>
    </location>
</feature>
<feature type="active site" description="For phospholipase activity" evidence="2">
    <location>
        <position position="140"/>
    </location>
</feature>
<feature type="site" description="Important for phospholipase activity" evidence="2">
    <location>
        <position position="32"/>
    </location>
</feature>
<feature type="modified residue" description="Phosphothreonine" evidence="4">
    <location>
        <position position="44"/>
    </location>
</feature>
<feature type="modified residue" description="N6-acetyllysine" evidence="4">
    <location>
        <position position="63"/>
    </location>
</feature>
<feature type="modified residue" description="Phosphotyrosine" evidence="4">
    <location>
        <position position="89"/>
    </location>
</feature>
<feature type="modified residue" description="Phosphothreonine; by MAPK" evidence="2">
    <location>
        <position position="177"/>
    </location>
</feature>
<feature type="modified residue" description="N6-acetyllysine; alternate" evidence="4">
    <location>
        <position position="209"/>
    </location>
</feature>
<feature type="modified residue" description="N6-succinyllysine; alternate" evidence="1">
    <location>
        <position position="209"/>
    </location>
</feature>
<organism>
    <name type="scientific">Macaca fascicularis</name>
    <name type="common">Crab-eating macaque</name>
    <name type="synonym">Cynomolgus monkey</name>
    <dbReference type="NCBI Taxonomy" id="9541"/>
    <lineage>
        <taxon>Eukaryota</taxon>
        <taxon>Metazoa</taxon>
        <taxon>Chordata</taxon>
        <taxon>Craniata</taxon>
        <taxon>Vertebrata</taxon>
        <taxon>Euteleostomi</taxon>
        <taxon>Mammalia</taxon>
        <taxon>Eutheria</taxon>
        <taxon>Euarchontoglires</taxon>
        <taxon>Primates</taxon>
        <taxon>Haplorrhini</taxon>
        <taxon>Catarrhini</taxon>
        <taxon>Cercopithecidae</taxon>
        <taxon>Cercopithecinae</taxon>
        <taxon>Macaca</taxon>
    </lineage>
</organism>